<sequence>MHLLVYLSLFFALALASVTEISLDNKHRHRHEQQGHHDSAKHGHQKDKQQQEQIKNDEGKLTKEEKILSEENSDFSVNLFNQLSTESKRSPRKNIFFSPISISAAFYMLALGAKSETHQQILKGLSFNKKKLSESQVHEAFKRLIEDSNNPMKAHQFTIGNALFVEQTVNILKGFEENVKHYYQAGVFPMNFKDPDNAKKQLNNYVKDKTHGVIQEMIRELDSNTEMVLVNYVLYKGEWANNFNPTLTQKSLFSVDKNTNVTVQMMNRLGLYRTYQDDDCKIIELPYKNDTAMLLVVPQLGKIQELVLTSKLINHWYESLATSIVDLYMPTFSISGKVVLKDTLRKMGISDIFTDKADLTGISEQIKLKVSMASHNAVLNVNEFGTEAVGATSAQASPTKLFPPFLIDSPFLVMIYSRTLGSQLFMGKVMDPTNAQ</sequence>
<evidence type="ECO:0000255" key="1"/>
<evidence type="ECO:0000256" key="2">
    <source>
        <dbReference type="SAM" id="MobiDB-lite"/>
    </source>
</evidence>
<evidence type="ECO:0000269" key="3">
    <source>
    </source>
</evidence>
<evidence type="ECO:0000305" key="4"/>
<organism>
    <name type="scientific">Xenopus laevis</name>
    <name type="common">African clawed frog</name>
    <dbReference type="NCBI Taxonomy" id="8355"/>
    <lineage>
        <taxon>Eukaryota</taxon>
        <taxon>Metazoa</taxon>
        <taxon>Chordata</taxon>
        <taxon>Craniata</taxon>
        <taxon>Vertebrata</taxon>
        <taxon>Euteleostomi</taxon>
        <taxon>Amphibia</taxon>
        <taxon>Batrachia</taxon>
        <taxon>Anura</taxon>
        <taxon>Pipoidea</taxon>
        <taxon>Pipidae</taxon>
        <taxon>Xenopodinae</taxon>
        <taxon>Xenopus</taxon>
        <taxon>Xenopus</taxon>
    </lineage>
</organism>
<dbReference type="EMBL" id="M76410">
    <property type="protein sequence ID" value="AAA49703.1"/>
    <property type="molecule type" value="mRNA"/>
</dbReference>
<dbReference type="EMBL" id="BC170492">
    <property type="protein sequence ID" value="AAI70492.1"/>
    <property type="molecule type" value="mRNA"/>
</dbReference>
<dbReference type="EMBL" id="BC170494">
    <property type="protein sequence ID" value="AAI70494.1"/>
    <property type="molecule type" value="mRNA"/>
</dbReference>
<dbReference type="PIR" id="A42440">
    <property type="entry name" value="A42440"/>
</dbReference>
<dbReference type="RefSeq" id="NP_001079103.1">
    <property type="nucleotide sequence ID" value="NM_001085634.1"/>
</dbReference>
<dbReference type="SMR" id="Q00387"/>
<dbReference type="GlyCosmos" id="Q00387">
    <property type="glycosylation" value="2 sites, No reported glycans"/>
</dbReference>
<dbReference type="ABCD" id="Q00387">
    <property type="antibodies" value="1 sequenced antibody"/>
</dbReference>
<dbReference type="GeneID" id="373636"/>
<dbReference type="KEGG" id="xla:373636"/>
<dbReference type="AGR" id="Xenbase:XB-GENE-6252882"/>
<dbReference type="CTD" id="373636"/>
<dbReference type="Xenbase" id="XB-GENE-6252882">
    <property type="gene designation" value="serpina6.L"/>
</dbReference>
<dbReference type="OMA" id="RHIDELY"/>
<dbReference type="OrthoDB" id="671595at2759"/>
<dbReference type="Proteomes" id="UP000186698">
    <property type="component" value="Chromosome 8L"/>
</dbReference>
<dbReference type="Bgee" id="373636">
    <property type="expression patterns" value="Expressed in liver and 3 other cell types or tissues"/>
</dbReference>
<dbReference type="GO" id="GO:0005615">
    <property type="term" value="C:extracellular space"/>
    <property type="evidence" value="ECO:0000318"/>
    <property type="project" value="GO_Central"/>
</dbReference>
<dbReference type="GO" id="GO:0004867">
    <property type="term" value="F:serine-type endopeptidase inhibitor activity"/>
    <property type="evidence" value="ECO:0000318"/>
    <property type="project" value="GO_Central"/>
</dbReference>
<dbReference type="CDD" id="cd19957">
    <property type="entry name" value="serpinA"/>
    <property type="match status" value="1"/>
</dbReference>
<dbReference type="FunFam" id="3.30.497.10:FF:000001">
    <property type="entry name" value="Serine protease inhibitor"/>
    <property type="match status" value="1"/>
</dbReference>
<dbReference type="Gene3D" id="2.30.39.10">
    <property type="entry name" value="Alpha-1-antitrypsin, domain 1"/>
    <property type="match status" value="1"/>
</dbReference>
<dbReference type="Gene3D" id="3.30.497.10">
    <property type="entry name" value="Antithrombin, subunit I, domain 2"/>
    <property type="match status" value="1"/>
</dbReference>
<dbReference type="Gene3D" id="2.10.310.10">
    <property type="entry name" value="Serpins superfamily"/>
    <property type="match status" value="1"/>
</dbReference>
<dbReference type="InterPro" id="IPR023795">
    <property type="entry name" value="Serpin_CS"/>
</dbReference>
<dbReference type="InterPro" id="IPR023796">
    <property type="entry name" value="Serpin_dom"/>
</dbReference>
<dbReference type="InterPro" id="IPR000215">
    <property type="entry name" value="Serpin_fam"/>
</dbReference>
<dbReference type="InterPro" id="IPR036186">
    <property type="entry name" value="Serpin_sf"/>
</dbReference>
<dbReference type="InterPro" id="IPR042178">
    <property type="entry name" value="Serpin_sf_1"/>
</dbReference>
<dbReference type="InterPro" id="IPR042185">
    <property type="entry name" value="Serpin_sf_2"/>
</dbReference>
<dbReference type="PANTHER" id="PTHR11461:SF383">
    <property type="entry name" value="SERINE PROTEASE INHIBITOR A6"/>
    <property type="match status" value="1"/>
</dbReference>
<dbReference type="PANTHER" id="PTHR11461">
    <property type="entry name" value="SERINE PROTEASE INHIBITOR, SERPIN"/>
    <property type="match status" value="1"/>
</dbReference>
<dbReference type="Pfam" id="PF00079">
    <property type="entry name" value="Serpin"/>
    <property type="match status" value="1"/>
</dbReference>
<dbReference type="SMART" id="SM00093">
    <property type="entry name" value="SERPIN"/>
    <property type="match status" value="1"/>
</dbReference>
<dbReference type="SUPFAM" id="SSF56574">
    <property type="entry name" value="Serpins"/>
    <property type="match status" value="1"/>
</dbReference>
<dbReference type="PROSITE" id="PS00284">
    <property type="entry name" value="SERPIN"/>
    <property type="match status" value="1"/>
</dbReference>
<gene>
    <name type="primary">serpina6</name>
    <name type="synonym">ep45</name>
</gene>
<name>EP45_XENLA</name>
<reference key="1">
    <citation type="journal article" date="1992" name="J. Biol. Chem.">
        <title>A major estrogen-regulated protein secreted from the liver of Xenopus laevis is a member of the serpin superfamily. Nucleotide sequence of cDNA and hormonal induction of mRNA.</title>
        <authorList>
            <person name="Holland L.J."/>
            <person name="Suksang C."/>
            <person name="Wall A.A."/>
            <person name="Roberts L.R."/>
            <person name="Moser D.R."/>
            <person name="Bhattacharya A."/>
        </authorList>
    </citation>
    <scope>NUCLEOTIDE SEQUENCE [MRNA]</scope>
    <scope>SUBCELLULAR LOCATION</scope>
    <scope>TISSUE SPECIFICITY</scope>
    <scope>INDUCTION</scope>
    <source>
        <tissue>Hepatocyte</tissue>
    </source>
</reference>
<reference key="2">
    <citation type="submission" date="2008-11" db="EMBL/GenBank/DDBJ databases">
        <authorList>
            <consortium name="NIH - Xenopus Gene Collection (XGC) project"/>
        </authorList>
    </citation>
    <scope>NUCLEOTIDE SEQUENCE [LARGE SCALE MRNA]</scope>
</reference>
<proteinExistence type="evidence at transcript level"/>
<feature type="signal peptide" evidence="1">
    <location>
        <begin position="1"/>
        <end position="16"/>
    </location>
</feature>
<feature type="chain" id="PRO_0000032536" description="Serine protease inhibitor A6">
    <location>
        <begin position="17"/>
        <end position="436"/>
    </location>
</feature>
<feature type="region of interest" description="Disordered" evidence="2">
    <location>
        <begin position="26"/>
        <end position="60"/>
    </location>
</feature>
<feature type="compositionally biased region" description="Basic and acidic residues" evidence="2">
    <location>
        <begin position="32"/>
        <end position="60"/>
    </location>
</feature>
<feature type="glycosylation site" description="N-linked (GlcNAc...) asparagine" evidence="1">
    <location>
        <position position="260"/>
    </location>
</feature>
<feature type="glycosylation site" description="N-linked (GlcNAc...) asparagine" evidence="1">
    <location>
        <position position="289"/>
    </location>
</feature>
<feature type="sequence conflict" description="In Ref. 1; AAA49703." evidence="4" ref="1">
    <original>V</original>
    <variation>F</variation>
    <location>
        <position position="297"/>
    </location>
</feature>
<accession>Q00387</accession>
<accession>B7ZSE2</accession>
<comment type="function">
    <text>Not yet known.</text>
</comment>
<comment type="subcellular location">
    <subcellularLocation>
        <location evidence="3">Secreted</location>
        <location evidence="3">Extracellular space</location>
    </subcellularLocation>
</comment>
<comment type="tissue specificity">
    <text evidence="3">Liver.</text>
</comment>
<comment type="induction">
    <text evidence="3">By estrogen.</text>
</comment>
<comment type="similarity">
    <text evidence="4">Belongs to the serpin family.</text>
</comment>
<protein>
    <recommendedName>
        <fullName>Serine protease inhibitor A6</fullName>
        <shortName>Serpin A6</shortName>
    </recommendedName>
    <alternativeName>
        <fullName>Estrogen-regulated protein EP45</fullName>
    </alternativeName>
</protein>
<keyword id="KW-0325">Glycoprotein</keyword>
<keyword id="KW-1185">Reference proteome</keyword>
<keyword id="KW-0964">Secreted</keyword>
<keyword id="KW-0732">Signal</keyword>